<comment type="similarity">
    <text evidence="1">Belongs to the bacterial ribosomal protein bL32 family.</text>
</comment>
<keyword id="KW-1185">Reference proteome</keyword>
<keyword id="KW-0687">Ribonucleoprotein</keyword>
<keyword id="KW-0689">Ribosomal protein</keyword>
<evidence type="ECO:0000255" key="1">
    <source>
        <dbReference type="HAMAP-Rule" id="MF_00340"/>
    </source>
</evidence>
<evidence type="ECO:0000256" key="2">
    <source>
        <dbReference type="SAM" id="MobiDB-lite"/>
    </source>
</evidence>
<evidence type="ECO:0000305" key="3"/>
<organism>
    <name type="scientific">Opitutus terrae (strain DSM 11246 / JCM 15787 / PB90-1)</name>
    <dbReference type="NCBI Taxonomy" id="452637"/>
    <lineage>
        <taxon>Bacteria</taxon>
        <taxon>Pseudomonadati</taxon>
        <taxon>Verrucomicrobiota</taxon>
        <taxon>Opitutia</taxon>
        <taxon>Opitutales</taxon>
        <taxon>Opitutaceae</taxon>
        <taxon>Opitutus</taxon>
    </lineage>
</organism>
<sequence>MANPKRKQSKRRSANRRAANAFIAPEFAKDPTDGSAFRPHRVNPKNGMYRGRQVLNVEV</sequence>
<feature type="chain" id="PRO_1000120152" description="Large ribosomal subunit protein bL32">
    <location>
        <begin position="1"/>
        <end position="59"/>
    </location>
</feature>
<feature type="region of interest" description="Disordered" evidence="2">
    <location>
        <begin position="1"/>
        <end position="48"/>
    </location>
</feature>
<feature type="compositionally biased region" description="Basic residues" evidence="2">
    <location>
        <begin position="1"/>
        <end position="15"/>
    </location>
</feature>
<proteinExistence type="inferred from homology"/>
<reference key="1">
    <citation type="journal article" date="2011" name="J. Bacteriol.">
        <title>Genome sequence of the verrucomicrobium Opitutus terrae PB90-1, an abundant inhabitant of rice paddy soil ecosystems.</title>
        <authorList>
            <person name="van Passel M.W."/>
            <person name="Kant R."/>
            <person name="Palva A."/>
            <person name="Copeland A."/>
            <person name="Lucas S."/>
            <person name="Lapidus A."/>
            <person name="Glavina del Rio T."/>
            <person name="Pitluck S."/>
            <person name="Goltsman E."/>
            <person name="Clum A."/>
            <person name="Sun H."/>
            <person name="Schmutz J."/>
            <person name="Larimer F.W."/>
            <person name="Land M.L."/>
            <person name="Hauser L."/>
            <person name="Kyrpides N."/>
            <person name="Mikhailova N."/>
            <person name="Richardson P.P."/>
            <person name="Janssen P.H."/>
            <person name="de Vos W.M."/>
            <person name="Smidt H."/>
        </authorList>
    </citation>
    <scope>NUCLEOTIDE SEQUENCE [LARGE SCALE GENOMIC DNA]</scope>
    <source>
        <strain>DSM 11246 / JCM 15787 / PB90-1</strain>
    </source>
</reference>
<name>RL32_OPITP</name>
<gene>
    <name evidence="1" type="primary">rpmF</name>
    <name type="ordered locus">Oter_3599</name>
</gene>
<dbReference type="EMBL" id="CP001032">
    <property type="protein sequence ID" value="ACB76876.1"/>
    <property type="molecule type" value="Genomic_DNA"/>
</dbReference>
<dbReference type="RefSeq" id="WP_012376405.1">
    <property type="nucleotide sequence ID" value="NC_010571.1"/>
</dbReference>
<dbReference type="SMR" id="B1ZWC4"/>
<dbReference type="STRING" id="452637.Oter_3599"/>
<dbReference type="KEGG" id="ote:Oter_3599"/>
<dbReference type="eggNOG" id="COG0333">
    <property type="taxonomic scope" value="Bacteria"/>
</dbReference>
<dbReference type="HOGENOM" id="CLU_129084_1_0_0"/>
<dbReference type="OrthoDB" id="9812874at2"/>
<dbReference type="Proteomes" id="UP000007013">
    <property type="component" value="Chromosome"/>
</dbReference>
<dbReference type="GO" id="GO:0015934">
    <property type="term" value="C:large ribosomal subunit"/>
    <property type="evidence" value="ECO:0007669"/>
    <property type="project" value="InterPro"/>
</dbReference>
<dbReference type="GO" id="GO:0003735">
    <property type="term" value="F:structural constituent of ribosome"/>
    <property type="evidence" value="ECO:0007669"/>
    <property type="project" value="InterPro"/>
</dbReference>
<dbReference type="GO" id="GO:0006412">
    <property type="term" value="P:translation"/>
    <property type="evidence" value="ECO:0007669"/>
    <property type="project" value="UniProtKB-UniRule"/>
</dbReference>
<dbReference type="HAMAP" id="MF_00340">
    <property type="entry name" value="Ribosomal_bL32"/>
    <property type="match status" value="1"/>
</dbReference>
<dbReference type="InterPro" id="IPR002677">
    <property type="entry name" value="Ribosomal_bL32"/>
</dbReference>
<dbReference type="InterPro" id="IPR044957">
    <property type="entry name" value="Ribosomal_bL32_bact"/>
</dbReference>
<dbReference type="InterPro" id="IPR011332">
    <property type="entry name" value="Ribosomal_zn-bd"/>
</dbReference>
<dbReference type="NCBIfam" id="TIGR01031">
    <property type="entry name" value="rpmF_bact"/>
    <property type="match status" value="1"/>
</dbReference>
<dbReference type="PANTHER" id="PTHR35534">
    <property type="entry name" value="50S RIBOSOMAL PROTEIN L32"/>
    <property type="match status" value="1"/>
</dbReference>
<dbReference type="PANTHER" id="PTHR35534:SF1">
    <property type="entry name" value="LARGE RIBOSOMAL SUBUNIT PROTEIN BL32"/>
    <property type="match status" value="1"/>
</dbReference>
<dbReference type="Pfam" id="PF01783">
    <property type="entry name" value="Ribosomal_L32p"/>
    <property type="match status" value="1"/>
</dbReference>
<dbReference type="SUPFAM" id="SSF57829">
    <property type="entry name" value="Zn-binding ribosomal proteins"/>
    <property type="match status" value="1"/>
</dbReference>
<accession>B1ZWC4</accession>
<protein>
    <recommendedName>
        <fullName evidence="1">Large ribosomal subunit protein bL32</fullName>
    </recommendedName>
    <alternativeName>
        <fullName evidence="3">50S ribosomal protein L32</fullName>
    </alternativeName>
</protein>